<organism>
    <name type="scientific">Streptococcus pyogenes serotype M3 (strain ATCC BAA-595 / MGAS315)</name>
    <dbReference type="NCBI Taxonomy" id="198466"/>
    <lineage>
        <taxon>Bacteria</taxon>
        <taxon>Bacillati</taxon>
        <taxon>Bacillota</taxon>
        <taxon>Bacilli</taxon>
        <taxon>Lactobacillales</taxon>
        <taxon>Streptococcaceae</taxon>
        <taxon>Streptococcus</taxon>
    </lineage>
</organism>
<name>GATC_STRP3</name>
<reference key="1">
    <citation type="journal article" date="2002" name="Proc. Natl. Acad. Sci. U.S.A.">
        <title>Genome sequence of a serotype M3 strain of group A Streptococcus: phage-encoded toxins, the high-virulence phenotype, and clone emergence.</title>
        <authorList>
            <person name="Beres S.B."/>
            <person name="Sylva G.L."/>
            <person name="Barbian K.D."/>
            <person name="Lei B."/>
            <person name="Hoff J.S."/>
            <person name="Mammarella N.D."/>
            <person name="Liu M.-Y."/>
            <person name="Smoot J.C."/>
            <person name="Porcella S.F."/>
            <person name="Parkins L.D."/>
            <person name="Campbell D.S."/>
            <person name="Smith T.M."/>
            <person name="McCormick J.K."/>
            <person name="Leung D.Y.M."/>
            <person name="Schlievert P.M."/>
            <person name="Musser J.M."/>
        </authorList>
    </citation>
    <scope>NUCLEOTIDE SEQUENCE [LARGE SCALE GENOMIC DNA]</scope>
    <source>
        <strain>ATCC BAA-595 / MGAS315</strain>
    </source>
</reference>
<feature type="chain" id="PRO_0000105346" description="Glutamyl-tRNA(Gln) amidotransferase subunit C">
    <location>
        <begin position="1"/>
        <end position="100"/>
    </location>
</feature>
<accession>P0DB28</accession>
<accession>P68891</accession>
<accession>P82582</accession>
<accession>Q99YB9</accession>
<evidence type="ECO:0000255" key="1">
    <source>
        <dbReference type="HAMAP-Rule" id="MF_00122"/>
    </source>
</evidence>
<dbReference type="EC" id="6.3.5.-" evidence="1"/>
<dbReference type="EMBL" id="AE014074">
    <property type="protein sequence ID" value="AAM80148.1"/>
    <property type="molecule type" value="Genomic_DNA"/>
</dbReference>
<dbReference type="RefSeq" id="WP_002988561.1">
    <property type="nucleotide sequence ID" value="NC_004070.1"/>
</dbReference>
<dbReference type="SMR" id="P0DB28"/>
<dbReference type="GeneID" id="83690022"/>
<dbReference type="KEGG" id="spg:SpyM3_1541"/>
<dbReference type="HOGENOM" id="CLU_105899_1_2_9"/>
<dbReference type="Proteomes" id="UP000000564">
    <property type="component" value="Chromosome"/>
</dbReference>
<dbReference type="GO" id="GO:0050566">
    <property type="term" value="F:asparaginyl-tRNA synthase (glutamine-hydrolyzing) activity"/>
    <property type="evidence" value="ECO:0007669"/>
    <property type="project" value="RHEA"/>
</dbReference>
<dbReference type="GO" id="GO:0005524">
    <property type="term" value="F:ATP binding"/>
    <property type="evidence" value="ECO:0007669"/>
    <property type="project" value="UniProtKB-KW"/>
</dbReference>
<dbReference type="GO" id="GO:0050567">
    <property type="term" value="F:glutaminyl-tRNA synthase (glutamine-hydrolyzing) activity"/>
    <property type="evidence" value="ECO:0007669"/>
    <property type="project" value="UniProtKB-UniRule"/>
</dbReference>
<dbReference type="GO" id="GO:0070681">
    <property type="term" value="P:glutaminyl-tRNAGln biosynthesis via transamidation"/>
    <property type="evidence" value="ECO:0007669"/>
    <property type="project" value="TreeGrafter"/>
</dbReference>
<dbReference type="GO" id="GO:0006450">
    <property type="term" value="P:regulation of translational fidelity"/>
    <property type="evidence" value="ECO:0007669"/>
    <property type="project" value="InterPro"/>
</dbReference>
<dbReference type="GO" id="GO:0006412">
    <property type="term" value="P:translation"/>
    <property type="evidence" value="ECO:0007669"/>
    <property type="project" value="UniProtKB-UniRule"/>
</dbReference>
<dbReference type="Gene3D" id="1.10.20.60">
    <property type="entry name" value="Glu-tRNAGln amidotransferase C subunit, N-terminal domain"/>
    <property type="match status" value="1"/>
</dbReference>
<dbReference type="HAMAP" id="MF_00122">
    <property type="entry name" value="GatC"/>
    <property type="match status" value="1"/>
</dbReference>
<dbReference type="InterPro" id="IPR036113">
    <property type="entry name" value="Asp/Glu-ADT_sf_sub_c"/>
</dbReference>
<dbReference type="InterPro" id="IPR003837">
    <property type="entry name" value="GatC"/>
</dbReference>
<dbReference type="NCBIfam" id="TIGR00135">
    <property type="entry name" value="gatC"/>
    <property type="match status" value="1"/>
</dbReference>
<dbReference type="PANTHER" id="PTHR15004">
    <property type="entry name" value="GLUTAMYL-TRNA(GLN) AMIDOTRANSFERASE SUBUNIT C, MITOCHONDRIAL"/>
    <property type="match status" value="1"/>
</dbReference>
<dbReference type="PANTHER" id="PTHR15004:SF0">
    <property type="entry name" value="GLUTAMYL-TRNA(GLN) AMIDOTRANSFERASE SUBUNIT C, MITOCHONDRIAL"/>
    <property type="match status" value="1"/>
</dbReference>
<dbReference type="Pfam" id="PF02686">
    <property type="entry name" value="GatC"/>
    <property type="match status" value="1"/>
</dbReference>
<dbReference type="SUPFAM" id="SSF141000">
    <property type="entry name" value="Glu-tRNAGln amidotransferase C subunit"/>
    <property type="match status" value="1"/>
</dbReference>
<gene>
    <name evidence="1" type="primary">gatC</name>
    <name type="ordered locus">SpyM3_1541</name>
</gene>
<keyword id="KW-0067">ATP-binding</keyword>
<keyword id="KW-0436">Ligase</keyword>
<keyword id="KW-0547">Nucleotide-binding</keyword>
<keyword id="KW-0648">Protein biosynthesis</keyword>
<proteinExistence type="inferred from homology"/>
<protein>
    <recommendedName>
        <fullName>Glutamyl-tRNA(Gln) amidotransferase subunit C</fullName>
        <shortName>Glu-ADT subunit C</shortName>
        <ecNumber evidence="1">6.3.5.-</ecNumber>
    </recommendedName>
</protein>
<sequence>MKISEEEVRHVAKLSKLSFSESETTTFATTLSKIVDMVELLNEVDTEGVAITTTMADKKNVMRQDVAEEGTDRALLFKNVPEKENHFIKVPAILDDGGDA</sequence>
<comment type="function">
    <text evidence="1">Allows the formation of correctly charged Asn-tRNA(Asn) or Gln-tRNA(Gln) through the transamidation of misacylated Asp-tRNA(Asn) or Glu-tRNA(Gln) in organisms which lack either or both of asparaginyl-tRNA or glutaminyl-tRNA synthetases. The reaction takes place in the presence of glutamine and ATP through an activated phospho-Asp-tRNA(Asn) or phospho-Glu-tRNA(Gln).</text>
</comment>
<comment type="catalytic activity">
    <reaction evidence="1">
        <text>L-glutamyl-tRNA(Gln) + L-glutamine + ATP + H2O = L-glutaminyl-tRNA(Gln) + L-glutamate + ADP + phosphate + H(+)</text>
        <dbReference type="Rhea" id="RHEA:17521"/>
        <dbReference type="Rhea" id="RHEA-COMP:9681"/>
        <dbReference type="Rhea" id="RHEA-COMP:9684"/>
        <dbReference type="ChEBI" id="CHEBI:15377"/>
        <dbReference type="ChEBI" id="CHEBI:15378"/>
        <dbReference type="ChEBI" id="CHEBI:29985"/>
        <dbReference type="ChEBI" id="CHEBI:30616"/>
        <dbReference type="ChEBI" id="CHEBI:43474"/>
        <dbReference type="ChEBI" id="CHEBI:58359"/>
        <dbReference type="ChEBI" id="CHEBI:78520"/>
        <dbReference type="ChEBI" id="CHEBI:78521"/>
        <dbReference type="ChEBI" id="CHEBI:456216"/>
    </reaction>
</comment>
<comment type="catalytic activity">
    <reaction evidence="1">
        <text>L-aspartyl-tRNA(Asn) + L-glutamine + ATP + H2O = L-asparaginyl-tRNA(Asn) + L-glutamate + ADP + phosphate + 2 H(+)</text>
        <dbReference type="Rhea" id="RHEA:14513"/>
        <dbReference type="Rhea" id="RHEA-COMP:9674"/>
        <dbReference type="Rhea" id="RHEA-COMP:9677"/>
        <dbReference type="ChEBI" id="CHEBI:15377"/>
        <dbReference type="ChEBI" id="CHEBI:15378"/>
        <dbReference type="ChEBI" id="CHEBI:29985"/>
        <dbReference type="ChEBI" id="CHEBI:30616"/>
        <dbReference type="ChEBI" id="CHEBI:43474"/>
        <dbReference type="ChEBI" id="CHEBI:58359"/>
        <dbReference type="ChEBI" id="CHEBI:78515"/>
        <dbReference type="ChEBI" id="CHEBI:78516"/>
        <dbReference type="ChEBI" id="CHEBI:456216"/>
    </reaction>
</comment>
<comment type="subunit">
    <text evidence="1">Heterotrimer of A, B and C subunits.</text>
</comment>
<comment type="similarity">
    <text evidence="1">Belongs to the GatC family.</text>
</comment>